<evidence type="ECO:0000250" key="1"/>
<evidence type="ECO:0000305" key="2"/>
<organism>
    <name type="scientific">Salmonella typhi</name>
    <dbReference type="NCBI Taxonomy" id="90370"/>
    <lineage>
        <taxon>Bacteria</taxon>
        <taxon>Pseudomonadati</taxon>
        <taxon>Pseudomonadota</taxon>
        <taxon>Gammaproteobacteria</taxon>
        <taxon>Enterobacterales</taxon>
        <taxon>Enterobacteriaceae</taxon>
        <taxon>Salmonella</taxon>
    </lineage>
</organism>
<keyword id="KW-0998">Cell outer membrane</keyword>
<keyword id="KW-0406">Ion transport</keyword>
<keyword id="KW-0472">Membrane</keyword>
<keyword id="KW-0626">Porin</keyword>
<keyword id="KW-0732">Signal</keyword>
<keyword id="KW-0762">Sugar transport</keyword>
<keyword id="KW-0812">Transmembrane</keyword>
<keyword id="KW-1134">Transmembrane beta strand</keyword>
<keyword id="KW-0813">Transport</keyword>
<proteinExistence type="inferred from homology"/>
<name>OMPL_SALTI</name>
<accession>Q8Z2T0</accession>
<accession>Q7C6L0</accession>
<protein>
    <recommendedName>
        <fullName>Porin OmpL</fullName>
    </recommendedName>
</protein>
<gene>
    <name type="primary">ompL</name>
    <name type="ordered locus">STY3862</name>
    <name type="ordered locus">t3605</name>
</gene>
<comment type="function">
    <text evidence="1">Outer membrane channel protein that allows an efficient diffusion of low-molecular-weight solutes such as small sugars and tetraglycine. However, the specific substrate recognized by the OmpL channel is unknown (By similarity).</text>
</comment>
<comment type="subcellular location">
    <subcellularLocation>
        <location evidence="1">Cell outer membrane</location>
        <topology evidence="1">Multi-pass membrane protein</topology>
    </subcellularLocation>
</comment>
<comment type="similarity">
    <text evidence="2">Belongs to the oligogalacturonate-specific porin KdgM (TC 1.B.35) family. OmpL subfamily.</text>
</comment>
<dbReference type="EMBL" id="AL513382">
    <property type="protein sequence ID" value="CAD09610.1"/>
    <property type="molecule type" value="Genomic_DNA"/>
</dbReference>
<dbReference type="EMBL" id="AE014613">
    <property type="protein sequence ID" value="AAO71107.1"/>
    <property type="molecule type" value="Genomic_DNA"/>
</dbReference>
<dbReference type="RefSeq" id="NP_458034.1">
    <property type="nucleotide sequence ID" value="NC_003198.1"/>
</dbReference>
<dbReference type="RefSeq" id="WP_000838825.1">
    <property type="nucleotide sequence ID" value="NZ_WSUR01000010.1"/>
</dbReference>
<dbReference type="SMR" id="Q8Z2T0"/>
<dbReference type="STRING" id="220341.gene:17587721"/>
<dbReference type="KEGG" id="stt:t3605"/>
<dbReference type="KEGG" id="sty:STY3862"/>
<dbReference type="PATRIC" id="fig|220341.7.peg.3942"/>
<dbReference type="eggNOG" id="COG1452">
    <property type="taxonomic scope" value="Bacteria"/>
</dbReference>
<dbReference type="HOGENOM" id="CLU_103714_0_0_6"/>
<dbReference type="OMA" id="DTHEFAN"/>
<dbReference type="OrthoDB" id="6587074at2"/>
<dbReference type="Proteomes" id="UP000000541">
    <property type="component" value="Chromosome"/>
</dbReference>
<dbReference type="Proteomes" id="UP000002670">
    <property type="component" value="Chromosome"/>
</dbReference>
<dbReference type="GO" id="GO:0009279">
    <property type="term" value="C:cell outer membrane"/>
    <property type="evidence" value="ECO:0007669"/>
    <property type="project" value="UniProtKB-SubCell"/>
</dbReference>
<dbReference type="GO" id="GO:0046930">
    <property type="term" value="C:pore complex"/>
    <property type="evidence" value="ECO:0007669"/>
    <property type="project" value="UniProtKB-KW"/>
</dbReference>
<dbReference type="GO" id="GO:0015288">
    <property type="term" value="F:porin activity"/>
    <property type="evidence" value="ECO:0007669"/>
    <property type="project" value="UniProtKB-KW"/>
</dbReference>
<dbReference type="GO" id="GO:0006811">
    <property type="term" value="P:monoatomic ion transport"/>
    <property type="evidence" value="ECO:0007669"/>
    <property type="project" value="UniProtKB-KW"/>
</dbReference>
<dbReference type="GO" id="GO:0015772">
    <property type="term" value="P:oligosaccharide transport"/>
    <property type="evidence" value="ECO:0007669"/>
    <property type="project" value="TreeGrafter"/>
</dbReference>
<dbReference type="FunFam" id="2.40.160.40:FF:000001">
    <property type="entry name" value="Porin OmpL"/>
    <property type="match status" value="1"/>
</dbReference>
<dbReference type="Gene3D" id="2.40.160.40">
    <property type="entry name" value="monomeric porin ompg"/>
    <property type="match status" value="1"/>
</dbReference>
<dbReference type="InterPro" id="IPR053713">
    <property type="entry name" value="Bact_OM_Channel_sf"/>
</dbReference>
<dbReference type="InterPro" id="IPR009331">
    <property type="entry name" value="Oligogalacturonate-sp_porin"/>
</dbReference>
<dbReference type="NCBIfam" id="NF007434">
    <property type="entry name" value="PRK09980.1"/>
    <property type="match status" value="1"/>
</dbReference>
<dbReference type="PANTHER" id="PTHR38105:SF2">
    <property type="entry name" value="N-ACETYLNEURAMINIC ACID OUTER MEMBRANE CHANNEL PROTEIN NANC-RELATED"/>
    <property type="match status" value="1"/>
</dbReference>
<dbReference type="PANTHER" id="PTHR38105">
    <property type="entry name" value="OUTER MEMBRANE PROTEIN-RELATED-RELATED"/>
    <property type="match status" value="1"/>
</dbReference>
<dbReference type="Pfam" id="PF06178">
    <property type="entry name" value="KdgM"/>
    <property type="match status" value="1"/>
</dbReference>
<feature type="signal peptide" evidence="1">
    <location>
        <begin position="1"/>
        <end position="20"/>
    </location>
</feature>
<feature type="chain" id="PRO_0000016608" description="Porin OmpL">
    <location>
        <begin position="21"/>
        <end position="230"/>
    </location>
</feature>
<reference key="1">
    <citation type="journal article" date="2001" name="Nature">
        <title>Complete genome sequence of a multiple drug resistant Salmonella enterica serovar Typhi CT18.</title>
        <authorList>
            <person name="Parkhill J."/>
            <person name="Dougan G."/>
            <person name="James K.D."/>
            <person name="Thomson N.R."/>
            <person name="Pickard D."/>
            <person name="Wain J."/>
            <person name="Churcher C.M."/>
            <person name="Mungall K.L."/>
            <person name="Bentley S.D."/>
            <person name="Holden M.T.G."/>
            <person name="Sebaihia M."/>
            <person name="Baker S."/>
            <person name="Basham D."/>
            <person name="Brooks K."/>
            <person name="Chillingworth T."/>
            <person name="Connerton P."/>
            <person name="Cronin A."/>
            <person name="Davis P."/>
            <person name="Davies R.M."/>
            <person name="Dowd L."/>
            <person name="White N."/>
            <person name="Farrar J."/>
            <person name="Feltwell T."/>
            <person name="Hamlin N."/>
            <person name="Haque A."/>
            <person name="Hien T.T."/>
            <person name="Holroyd S."/>
            <person name="Jagels K."/>
            <person name="Krogh A."/>
            <person name="Larsen T.S."/>
            <person name="Leather S."/>
            <person name="Moule S."/>
            <person name="O'Gaora P."/>
            <person name="Parry C."/>
            <person name="Quail M.A."/>
            <person name="Rutherford K.M."/>
            <person name="Simmonds M."/>
            <person name="Skelton J."/>
            <person name="Stevens K."/>
            <person name="Whitehead S."/>
            <person name="Barrell B.G."/>
        </authorList>
    </citation>
    <scope>NUCLEOTIDE SEQUENCE [LARGE SCALE GENOMIC DNA]</scope>
    <source>
        <strain>CT18</strain>
    </source>
</reference>
<reference key="2">
    <citation type="journal article" date="2003" name="J. Bacteriol.">
        <title>Comparative genomics of Salmonella enterica serovar Typhi strains Ty2 and CT18.</title>
        <authorList>
            <person name="Deng W."/>
            <person name="Liou S.-R."/>
            <person name="Plunkett G. III"/>
            <person name="Mayhew G.F."/>
            <person name="Rose D.J."/>
            <person name="Burland V."/>
            <person name="Kodoyianni V."/>
            <person name="Schwartz D.C."/>
            <person name="Blattner F.R."/>
        </authorList>
    </citation>
    <scope>NUCLEOTIDE SEQUENCE [LARGE SCALE GENOMIC DNA]</scope>
    <source>
        <strain>ATCC 700931 / Ty2</strain>
    </source>
</reference>
<sequence>MKSLNTLVILTSVISTSVFAGAYVENREAYNLASDQMEFMLRVGYNSDMGAGIMLTNTYTLQRDDELKHGYNEIEGWYPLFKPTDKLTIQPGGLINDKSIGSGGAVYLDINYKFTPWFNLTVRNRYNHNNYSSTDLNGELDNNDSYEIGNYWNFIITDKFSYTFEPHYFYNVNDFNSSNGTKHHWEITNTFRYRINEHWLPYFELRWLDRNVGLYHREQNQIRIGAKYFF</sequence>